<keyword id="KW-0614">Plasmid</keyword>
<feature type="chain" id="PRO_0000066429" description="Uncharacterized protein ORF4">
    <location>
        <begin position="1"/>
        <end position="237"/>
    </location>
</feature>
<feature type="region of interest" description="Disordered" evidence="1">
    <location>
        <begin position="213"/>
        <end position="237"/>
    </location>
</feature>
<feature type="compositionally biased region" description="Low complexity" evidence="1">
    <location>
        <begin position="223"/>
        <end position="237"/>
    </location>
</feature>
<organism>
    <name type="scientific">Methanothermobacter thermautotrophicus</name>
    <name type="common">Methanobacterium thermoformicicum</name>
    <dbReference type="NCBI Taxonomy" id="145262"/>
    <lineage>
        <taxon>Archaea</taxon>
        <taxon>Methanobacteriati</taxon>
        <taxon>Methanobacteriota</taxon>
        <taxon>Methanomada group</taxon>
        <taxon>Methanobacteria</taxon>
        <taxon>Methanobacteriales</taxon>
        <taxon>Methanobacteriaceae</taxon>
        <taxon>Methanothermobacter</taxon>
    </lineage>
</organism>
<evidence type="ECO:0000256" key="1">
    <source>
        <dbReference type="SAM" id="MobiDB-lite"/>
    </source>
</evidence>
<name>YPV4_METTF</name>
<proteinExistence type="predicted"/>
<dbReference type="EMBL" id="X68366">
    <property type="protein sequence ID" value="CAA48428.1"/>
    <property type="molecule type" value="Genomic_DNA"/>
</dbReference>
<dbReference type="PIR" id="S30304">
    <property type="entry name" value="S26439"/>
</dbReference>
<dbReference type="RefSeq" id="NP_039757.1">
    <property type="nucleotide sequence ID" value="NC_001336.1"/>
</dbReference>
<dbReference type="RefSeq" id="WP_010889843.1">
    <property type="nucleotide sequence ID" value="NC_001336.1"/>
</dbReference>
<dbReference type="SMR" id="P29575"/>
<dbReference type="InterPro" id="IPR007404">
    <property type="entry name" value="YdjM-like"/>
</dbReference>
<dbReference type="Pfam" id="PF04307">
    <property type="entry name" value="YdjM"/>
    <property type="match status" value="1"/>
</dbReference>
<accession>P29575</accession>
<reference key="1">
    <citation type="journal article" date="1992" name="Nucleic Acids Res.">
        <title>Modular organization of related Archaeal plasmids encoding different restriction-modification systems in Methanobacterium thermoformicicum.</title>
        <authorList>
            <person name="Noelling J."/>
            <person name="van Eeden F.J.M."/>
            <person name="Eggen R.I.L."/>
            <person name="de Vos W.M."/>
        </authorList>
    </citation>
    <scope>NUCLEOTIDE SEQUENCE [GENOMIC DNA]</scope>
    <source>
        <strain>DSM 3848 / THF</strain>
    </source>
</reference>
<sequence>MVYSRPIFCLCGDILWLSLERRAFTILFYVDNSFVCSSGLCRKGGVNEHKRQLHNVFTLIPFVLLYFFYDVTTGAAMLSGVSSHILLDFMTPTGCPFFYPIYRGRYRVNWRHKGSGPREKRALTTIGILAAILLLVIYAPSPFAPTSAISQWKGSGSGVNNTSNNGTDINVNFNFRGNGDTWIHPYPNGSIFIDCVGDSNSRVYRYRASSRGGQGKYLKLDSNTTENKTTKQNETGG</sequence>
<geneLocation type="plasmid">
    <name>pFV1</name>
</geneLocation>
<protein>
    <recommendedName>
        <fullName>Uncharacterized protein ORF4</fullName>
    </recommendedName>
</protein>